<comment type="function">
    <text evidence="1">Catalyzes the hydrolysis of complex carboxylic polyesters found in the cell wall of plants (By similarity). Degrades cutin, a macromolecule that forms the structure of the plant cuticle (By similarity). Allows pathogenic fungi to penetrate through the cuticular barrier into the host plant during the initial stage of fungal infection (By similarity).</text>
</comment>
<comment type="catalytic activity">
    <reaction evidence="4 5">
        <text>cutin + H2O = cutin monomers.</text>
        <dbReference type="EC" id="3.1.1.74"/>
    </reaction>
</comment>
<comment type="subcellular location">
    <subcellularLocation>
        <location evidence="2">Secreted</location>
    </subcellularLocation>
</comment>
<comment type="PTM">
    <text evidence="2">The 2 disulfide bonds play a critical role in holding the catalytic residues in juxta-position; reduction of the disulfide bridges results in the complete inactivation of the enzyme.</text>
</comment>
<comment type="similarity">
    <text evidence="6">Belongs to the cutinase family.</text>
</comment>
<keyword id="KW-1015">Disulfide bond</keyword>
<keyword id="KW-0378">Hydrolase</keyword>
<keyword id="KW-0964">Secreted</keyword>
<keyword id="KW-0719">Serine esterase</keyword>
<keyword id="KW-0732">Signal</keyword>
<keyword id="KW-0843">Virulence</keyword>
<gene>
    <name type="primary">CUT</name>
</gene>
<dbReference type="EC" id="3.1.1.74" evidence="4 5"/>
<dbReference type="EMBL" id="X65628">
    <property type="protein sequence ID" value="CAA46582.1"/>
    <property type="molecule type" value="Genomic_DNA"/>
</dbReference>
<dbReference type="PIR" id="S21427">
    <property type="entry name" value="S21427"/>
</dbReference>
<dbReference type="SMR" id="P29292"/>
<dbReference type="ESTHER" id="ascra-cutas">
    <property type="family name" value="Cutinase"/>
</dbReference>
<dbReference type="GO" id="GO:0005576">
    <property type="term" value="C:extracellular region"/>
    <property type="evidence" value="ECO:0007669"/>
    <property type="project" value="UniProtKB-SubCell"/>
</dbReference>
<dbReference type="GO" id="GO:0050525">
    <property type="term" value="F:cutinase activity"/>
    <property type="evidence" value="ECO:0000250"/>
    <property type="project" value="UniProtKB"/>
</dbReference>
<dbReference type="GO" id="GO:0016052">
    <property type="term" value="P:carbohydrate catabolic process"/>
    <property type="evidence" value="ECO:0007669"/>
    <property type="project" value="TreeGrafter"/>
</dbReference>
<dbReference type="FunFam" id="3.40.50.1820:FF:000235">
    <property type="entry name" value="Cutinase 1"/>
    <property type="match status" value="1"/>
</dbReference>
<dbReference type="Gene3D" id="3.40.50.1820">
    <property type="entry name" value="alpha/beta hydrolase"/>
    <property type="match status" value="1"/>
</dbReference>
<dbReference type="InterPro" id="IPR029058">
    <property type="entry name" value="AB_hydrolase_fold"/>
</dbReference>
<dbReference type="InterPro" id="IPR000675">
    <property type="entry name" value="Cutinase/axe"/>
</dbReference>
<dbReference type="InterPro" id="IPR043580">
    <property type="entry name" value="CUTINASE_1"/>
</dbReference>
<dbReference type="InterPro" id="IPR043579">
    <property type="entry name" value="CUTINASE_2"/>
</dbReference>
<dbReference type="InterPro" id="IPR011150">
    <property type="entry name" value="Cutinase_monf"/>
</dbReference>
<dbReference type="PANTHER" id="PTHR48250:SF3">
    <property type="entry name" value="CUTINASE 1-RELATED"/>
    <property type="match status" value="1"/>
</dbReference>
<dbReference type="PANTHER" id="PTHR48250">
    <property type="entry name" value="CUTINASE 2-RELATED"/>
    <property type="match status" value="1"/>
</dbReference>
<dbReference type="Pfam" id="PF01083">
    <property type="entry name" value="Cutinase"/>
    <property type="match status" value="1"/>
</dbReference>
<dbReference type="PRINTS" id="PR00129">
    <property type="entry name" value="CUTINASE"/>
</dbReference>
<dbReference type="SMART" id="SM01110">
    <property type="entry name" value="Cutinase"/>
    <property type="match status" value="1"/>
</dbReference>
<dbReference type="SUPFAM" id="SSF53474">
    <property type="entry name" value="alpha/beta-Hydrolases"/>
    <property type="match status" value="1"/>
</dbReference>
<dbReference type="PROSITE" id="PS00155">
    <property type="entry name" value="CUTINASE_1"/>
    <property type="match status" value="1"/>
</dbReference>
<dbReference type="PROSITE" id="PS00931">
    <property type="entry name" value="CUTINASE_2"/>
    <property type="match status" value="1"/>
</dbReference>
<evidence type="ECO:0000250" key="1">
    <source>
        <dbReference type="UniProtKB" id="P00590"/>
    </source>
</evidence>
<evidence type="ECO:0000250" key="2">
    <source>
        <dbReference type="UniProtKB" id="P11373"/>
    </source>
</evidence>
<evidence type="ECO:0000255" key="3"/>
<evidence type="ECO:0000255" key="4">
    <source>
        <dbReference type="PROSITE-ProRule" id="PRU10108"/>
    </source>
</evidence>
<evidence type="ECO:0000255" key="5">
    <source>
        <dbReference type="PROSITE-ProRule" id="PRU10109"/>
    </source>
</evidence>
<evidence type="ECO:0000305" key="6"/>
<name>CUTI_DIDRA</name>
<proteinExistence type="inferred from homology"/>
<reference key="1">
    <citation type="submission" date="1992-04" db="EMBL/GenBank/DDBJ databases">
        <authorList>
            <person name="Tenhaken R."/>
            <person name="Barz W."/>
        </authorList>
    </citation>
    <scope>NUCLEOTIDE SEQUENCE [GENOMIC DNA]</scope>
    <source>
        <strain>CBS 534.65</strain>
    </source>
</reference>
<sequence>MKFFAFSMLIGEASPIVLALRRTTLEVRQLDPIIRSELEQGSSSSCPKAILIFARGSTEIGNMGVSAGPAVASALEAYGADQIWVQGVGGPYTADLPSNFLPGGTSQSAINEAVRLFNEANTKCPSTPIVAGGYSQGTAVMAGAIPKLDAVRARVVGTVLFGYTQNQQNNKGIKDYPQEDLQVYCEVGDLVCDGTLIITVSHFLYLEEAAGPAPEFLKSKIGA</sequence>
<accession>P29292</accession>
<feature type="signal peptide" evidence="3">
    <location>
        <begin position="1"/>
        <end position="19"/>
    </location>
</feature>
<feature type="chain" id="PRO_0000006433" description="Cutinase">
    <location>
        <begin position="20"/>
        <end position="223"/>
    </location>
</feature>
<feature type="active site" description="Nucleophile" evidence="1">
    <location>
        <position position="135"/>
    </location>
</feature>
<feature type="active site" evidence="1">
    <location>
        <position position="189"/>
    </location>
</feature>
<feature type="active site" description="Proton donor/acceptor" evidence="1">
    <location>
        <position position="202"/>
    </location>
</feature>
<feature type="site" description="Transition state stabilizer" evidence="1">
    <location>
        <position position="57"/>
    </location>
</feature>
<feature type="site" description="Transition state stabilizer" evidence="1">
    <location>
        <position position="136"/>
    </location>
</feature>
<feature type="disulfide bond" evidence="1">
    <location>
        <begin position="46"/>
        <end position="124"/>
    </location>
</feature>
<feature type="disulfide bond" evidence="1">
    <location>
        <begin position="185"/>
        <end position="192"/>
    </location>
</feature>
<organism>
    <name type="scientific">Didymella rabiei</name>
    <name type="common">Chickpea ascochyta blight fungus</name>
    <name type="synonym">Mycosphaerella rabiei</name>
    <dbReference type="NCBI Taxonomy" id="5454"/>
    <lineage>
        <taxon>Eukaryota</taxon>
        <taxon>Fungi</taxon>
        <taxon>Dikarya</taxon>
        <taxon>Ascomycota</taxon>
        <taxon>Pezizomycotina</taxon>
        <taxon>Dothideomycetes</taxon>
        <taxon>Pleosporomycetidae</taxon>
        <taxon>Pleosporales</taxon>
        <taxon>Pleosporineae</taxon>
        <taxon>Didymellaceae</taxon>
        <taxon>Ascochyta</taxon>
    </lineage>
</organism>
<protein>
    <recommendedName>
        <fullName>Cutinase</fullName>
        <ecNumber evidence="4 5">3.1.1.74</ecNumber>
    </recommendedName>
    <alternativeName>
        <fullName>Cutin hydrolase</fullName>
    </alternativeName>
</protein>